<accession>P0A9I0</accession>
<accession>P07366</accession>
<dbReference type="EC" id="3.1.3.-"/>
<dbReference type="EMBL" id="AE014075">
    <property type="protein sequence ID" value="AAN80755.1"/>
    <property type="status" value="ALT_INIT"/>
    <property type="molecule type" value="Genomic_DNA"/>
</dbReference>
<dbReference type="RefSeq" id="WP_000983609.1">
    <property type="nucleotide sequence ID" value="NZ_CP051263.1"/>
</dbReference>
<dbReference type="SMR" id="P0A9I0"/>
<dbReference type="STRING" id="199310.c2296"/>
<dbReference type="GeneID" id="75171954"/>
<dbReference type="KEGG" id="ecc:c2296"/>
<dbReference type="eggNOG" id="COG3143">
    <property type="taxonomic scope" value="Bacteria"/>
</dbReference>
<dbReference type="HOGENOM" id="CLU_080718_1_0_6"/>
<dbReference type="Proteomes" id="UP000001410">
    <property type="component" value="Chromosome"/>
</dbReference>
<dbReference type="GO" id="GO:0009288">
    <property type="term" value="C:bacterial-type flagellum"/>
    <property type="evidence" value="ECO:0007669"/>
    <property type="project" value="InterPro"/>
</dbReference>
<dbReference type="GO" id="GO:0005737">
    <property type="term" value="C:cytoplasm"/>
    <property type="evidence" value="ECO:0007669"/>
    <property type="project" value="UniProtKB-SubCell"/>
</dbReference>
<dbReference type="GO" id="GO:0004721">
    <property type="term" value="F:phosphoprotein phosphatase activity"/>
    <property type="evidence" value="ECO:0007669"/>
    <property type="project" value="UniProtKB-KW"/>
</dbReference>
<dbReference type="GO" id="GO:0097588">
    <property type="term" value="P:archaeal or bacterial-type flagellum-dependent cell motility"/>
    <property type="evidence" value="ECO:0007669"/>
    <property type="project" value="UniProtKB-KW"/>
</dbReference>
<dbReference type="GO" id="GO:0006935">
    <property type="term" value="P:chemotaxis"/>
    <property type="evidence" value="ECO:0007669"/>
    <property type="project" value="UniProtKB-KW"/>
</dbReference>
<dbReference type="GO" id="GO:0050920">
    <property type="term" value="P:regulation of chemotaxis"/>
    <property type="evidence" value="ECO:0007669"/>
    <property type="project" value="InterPro"/>
</dbReference>
<dbReference type="FunFam" id="1.10.287.500:FF:000001">
    <property type="entry name" value="Protein phosphatase CheZ"/>
    <property type="match status" value="1"/>
</dbReference>
<dbReference type="Gene3D" id="1.10.287.500">
    <property type="entry name" value="Helix hairpin bin"/>
    <property type="match status" value="1"/>
</dbReference>
<dbReference type="Gene3D" id="1.20.5.590">
    <property type="entry name" value="Single helix bin"/>
    <property type="match status" value="1"/>
</dbReference>
<dbReference type="InterPro" id="IPR007439">
    <property type="entry name" value="Chemotax_Pase_CheZ"/>
</dbReference>
<dbReference type="InterPro" id="IPR050992">
    <property type="entry name" value="CheZ_family_phosphatases"/>
</dbReference>
<dbReference type="NCBIfam" id="NF008368">
    <property type="entry name" value="PRK11166.1"/>
    <property type="match status" value="1"/>
</dbReference>
<dbReference type="PANTHER" id="PTHR43693">
    <property type="entry name" value="PROTEIN PHOSPHATASE CHEZ"/>
    <property type="match status" value="1"/>
</dbReference>
<dbReference type="PANTHER" id="PTHR43693:SF1">
    <property type="entry name" value="PROTEIN PHOSPHATASE CHEZ"/>
    <property type="match status" value="1"/>
</dbReference>
<dbReference type="Pfam" id="PF04344">
    <property type="entry name" value="CheZ"/>
    <property type="match status" value="1"/>
</dbReference>
<dbReference type="PIRSF" id="PIRSF002884">
    <property type="entry name" value="CheZ"/>
    <property type="match status" value="1"/>
</dbReference>
<dbReference type="SUPFAM" id="SSF75708">
    <property type="entry name" value="Chemotaxis phosphatase CheZ"/>
    <property type="match status" value="1"/>
</dbReference>
<name>CHEZ_ECOL6</name>
<keyword id="KW-0145">Chemotaxis</keyword>
<keyword id="KW-0963">Cytoplasm</keyword>
<keyword id="KW-0283">Flagellar rotation</keyword>
<keyword id="KW-0378">Hydrolase</keyword>
<keyword id="KW-0904">Protein phosphatase</keyword>
<keyword id="KW-1185">Reference proteome</keyword>
<gene>
    <name type="primary">cheZ</name>
    <name type="ordered locus">c2296</name>
</gene>
<evidence type="ECO:0000250" key="1"/>
<evidence type="ECO:0000256" key="2">
    <source>
        <dbReference type="SAM" id="MobiDB-lite"/>
    </source>
</evidence>
<evidence type="ECO:0000305" key="3"/>
<protein>
    <recommendedName>
        <fullName>Protein phosphatase CheZ</fullName>
        <ecNumber>3.1.3.-</ecNumber>
    </recommendedName>
    <alternativeName>
        <fullName>Chemotaxis protein CheZ</fullName>
    </alternativeName>
</protein>
<comment type="function">
    <text evidence="1">Plays an important role in bacterial chemotaxis signal transduction pathway by accelerating the dephosphorylation of phosphorylated CheY (CheY-P).</text>
</comment>
<comment type="subunit">
    <text evidence="1">Homodimer.</text>
</comment>
<comment type="subcellular location">
    <subcellularLocation>
        <location evidence="1">Cytoplasm</location>
    </subcellularLocation>
</comment>
<comment type="similarity">
    <text evidence="3">Belongs to the CheZ family.</text>
</comment>
<comment type="sequence caution" evidence="3">
    <conflict type="erroneous initiation">
        <sequence resource="EMBL-CDS" id="AAN80755"/>
    </conflict>
    <text>Truncated N-terminus.</text>
</comment>
<proteinExistence type="inferred from homology"/>
<organism>
    <name type="scientific">Escherichia coli O6:H1 (strain CFT073 / ATCC 700928 / UPEC)</name>
    <dbReference type="NCBI Taxonomy" id="199310"/>
    <lineage>
        <taxon>Bacteria</taxon>
        <taxon>Pseudomonadati</taxon>
        <taxon>Pseudomonadota</taxon>
        <taxon>Gammaproteobacteria</taxon>
        <taxon>Enterobacterales</taxon>
        <taxon>Enterobacteriaceae</taxon>
        <taxon>Escherichia</taxon>
    </lineage>
</organism>
<sequence>MMQPSIKPADEHSAGDIIARIGSLTRMLRDSLRELGLDQAIAEAAEAIPDARDRLYYVVQMTAQAAERALNSVEASQPHQDQMEKSAKALTQRWDDWFADPIDLADARELVTDTRQFLADVPAHTSFTNAQLLEIMMAQDFQDLTGQVIKRMMDVIQEIERQLLMVLLENIPEQESRPKRENQSLLNGPQVDTSKAGVVASQDQVDDLLDSLGF</sequence>
<reference key="1">
    <citation type="journal article" date="2002" name="Proc. Natl. Acad. Sci. U.S.A.">
        <title>Extensive mosaic structure revealed by the complete genome sequence of uropathogenic Escherichia coli.</title>
        <authorList>
            <person name="Welch R.A."/>
            <person name="Burland V."/>
            <person name="Plunkett G. III"/>
            <person name="Redford P."/>
            <person name="Roesch P."/>
            <person name="Rasko D."/>
            <person name="Buckles E.L."/>
            <person name="Liou S.-R."/>
            <person name="Boutin A."/>
            <person name="Hackett J."/>
            <person name="Stroud D."/>
            <person name="Mayhew G.F."/>
            <person name="Rose D.J."/>
            <person name="Zhou S."/>
            <person name="Schwartz D.C."/>
            <person name="Perna N.T."/>
            <person name="Mobley H.L.T."/>
            <person name="Donnenberg M.S."/>
            <person name="Blattner F.R."/>
        </authorList>
    </citation>
    <scope>NUCLEOTIDE SEQUENCE [LARGE SCALE GENOMIC DNA]</scope>
    <source>
        <strain>CFT073 / ATCC 700928 / UPEC</strain>
    </source>
</reference>
<feature type="chain" id="PRO_0000089640" description="Protein phosphatase CheZ">
    <location>
        <begin position="1"/>
        <end position="214"/>
    </location>
</feature>
<feature type="region of interest" description="Disordered" evidence="2">
    <location>
        <begin position="174"/>
        <end position="199"/>
    </location>
</feature>
<feature type="compositionally biased region" description="Polar residues" evidence="2">
    <location>
        <begin position="183"/>
        <end position="193"/>
    </location>
</feature>
<feature type="site" description="Enhances dephosphorylation of CheY-P" evidence="1">
    <location>
        <position position="147"/>
    </location>
</feature>